<name>SIGA_ENTFA</name>
<organism>
    <name type="scientific">Enterococcus faecalis (strain ATCC 700802 / V583)</name>
    <dbReference type="NCBI Taxonomy" id="226185"/>
    <lineage>
        <taxon>Bacteria</taxon>
        <taxon>Bacillati</taxon>
        <taxon>Bacillota</taxon>
        <taxon>Bacilli</taxon>
        <taxon>Lactobacillales</taxon>
        <taxon>Enterococcaceae</taxon>
        <taxon>Enterococcus</taxon>
    </lineage>
</organism>
<accession>P52329</accession>
<evidence type="ECO:0000255" key="1">
    <source>
        <dbReference type="HAMAP-Rule" id="MF_00963"/>
    </source>
</evidence>
<evidence type="ECO:0000256" key="2">
    <source>
        <dbReference type="SAM" id="MobiDB-lite"/>
    </source>
</evidence>
<evidence type="ECO:0000305" key="3"/>
<protein>
    <recommendedName>
        <fullName evidence="1">RNA polymerase sigma factor SigA</fullName>
    </recommendedName>
    <alternativeName>
        <fullName>Sigma-42</fullName>
    </alternativeName>
</protein>
<dbReference type="EMBL" id="X86176">
    <property type="protein sequence ID" value="CAA60113.1"/>
    <property type="molecule type" value="Genomic_DNA"/>
</dbReference>
<dbReference type="EMBL" id="AE016830">
    <property type="protein sequence ID" value="AAO81311.1"/>
    <property type="molecule type" value="Genomic_DNA"/>
</dbReference>
<dbReference type="PIR" id="S54114">
    <property type="entry name" value="S54114"/>
</dbReference>
<dbReference type="RefSeq" id="NP_815241.1">
    <property type="nucleotide sequence ID" value="NC_004668.1"/>
</dbReference>
<dbReference type="RefSeq" id="WP_002360364.1">
    <property type="nucleotide sequence ID" value="NZ_KE136528.1"/>
</dbReference>
<dbReference type="SMR" id="P52329"/>
<dbReference type="STRING" id="226185.EF_1522"/>
<dbReference type="EnsemblBacteria" id="AAO81311">
    <property type="protein sequence ID" value="AAO81311"/>
    <property type="gene ID" value="EF_1522"/>
</dbReference>
<dbReference type="GeneID" id="60893830"/>
<dbReference type="KEGG" id="efa:EF1522"/>
<dbReference type="PATRIC" id="fig|226185.45.peg.1980"/>
<dbReference type="eggNOG" id="COG0568">
    <property type="taxonomic scope" value="Bacteria"/>
</dbReference>
<dbReference type="HOGENOM" id="CLU_014793_3_3_9"/>
<dbReference type="Proteomes" id="UP000001415">
    <property type="component" value="Chromosome"/>
</dbReference>
<dbReference type="GO" id="GO:0005737">
    <property type="term" value="C:cytoplasm"/>
    <property type="evidence" value="ECO:0007669"/>
    <property type="project" value="UniProtKB-SubCell"/>
</dbReference>
<dbReference type="GO" id="GO:0003677">
    <property type="term" value="F:DNA binding"/>
    <property type="evidence" value="ECO:0007669"/>
    <property type="project" value="UniProtKB-UniRule"/>
</dbReference>
<dbReference type="GO" id="GO:0016987">
    <property type="term" value="F:sigma factor activity"/>
    <property type="evidence" value="ECO:0007669"/>
    <property type="project" value="UniProtKB-UniRule"/>
</dbReference>
<dbReference type="GO" id="GO:0006352">
    <property type="term" value="P:DNA-templated transcription initiation"/>
    <property type="evidence" value="ECO:0007669"/>
    <property type="project" value="UniProtKB-UniRule"/>
</dbReference>
<dbReference type="CDD" id="cd06171">
    <property type="entry name" value="Sigma70_r4"/>
    <property type="match status" value="1"/>
</dbReference>
<dbReference type="FunFam" id="1.10.10.10:FF:000002">
    <property type="entry name" value="RNA polymerase sigma factor SigA"/>
    <property type="match status" value="1"/>
</dbReference>
<dbReference type="FunFam" id="1.10.10.10:FF:000004">
    <property type="entry name" value="RNA polymerase sigma factor SigA"/>
    <property type="match status" value="1"/>
</dbReference>
<dbReference type="FunFam" id="1.10.601.10:FF:000001">
    <property type="entry name" value="RNA polymerase sigma factor SigA"/>
    <property type="match status" value="1"/>
</dbReference>
<dbReference type="Gene3D" id="1.10.601.10">
    <property type="entry name" value="RNA Polymerase Primary Sigma Factor"/>
    <property type="match status" value="2"/>
</dbReference>
<dbReference type="Gene3D" id="1.10.220.120">
    <property type="entry name" value="Sigma-70 factor, region 1.1"/>
    <property type="match status" value="1"/>
</dbReference>
<dbReference type="Gene3D" id="1.10.10.10">
    <property type="entry name" value="Winged helix-like DNA-binding domain superfamily/Winged helix DNA-binding domain"/>
    <property type="match status" value="2"/>
</dbReference>
<dbReference type="HAMAP" id="MF_00963">
    <property type="entry name" value="Sigma70_RpoD_SigA"/>
    <property type="match status" value="1"/>
</dbReference>
<dbReference type="InterPro" id="IPR014284">
    <property type="entry name" value="RNA_pol_sigma-70_dom"/>
</dbReference>
<dbReference type="InterPro" id="IPR000943">
    <property type="entry name" value="RNA_pol_sigma70"/>
</dbReference>
<dbReference type="InterPro" id="IPR009042">
    <property type="entry name" value="RNA_pol_sigma70_r1_2"/>
</dbReference>
<dbReference type="InterPro" id="IPR007627">
    <property type="entry name" value="RNA_pol_sigma70_r2"/>
</dbReference>
<dbReference type="InterPro" id="IPR007624">
    <property type="entry name" value="RNA_pol_sigma70_r3"/>
</dbReference>
<dbReference type="InterPro" id="IPR007630">
    <property type="entry name" value="RNA_pol_sigma70_r4"/>
</dbReference>
<dbReference type="InterPro" id="IPR007127">
    <property type="entry name" value="RNA_pol_sigma_70_r1_1"/>
</dbReference>
<dbReference type="InterPro" id="IPR042189">
    <property type="entry name" value="RNA_pol_sigma_70_r1_1_sf"/>
</dbReference>
<dbReference type="InterPro" id="IPR013325">
    <property type="entry name" value="RNA_pol_sigma_r2"/>
</dbReference>
<dbReference type="InterPro" id="IPR013324">
    <property type="entry name" value="RNA_pol_sigma_r3/r4-like"/>
</dbReference>
<dbReference type="InterPro" id="IPR012760">
    <property type="entry name" value="RNA_pol_sigma_RpoD_C"/>
</dbReference>
<dbReference type="InterPro" id="IPR050239">
    <property type="entry name" value="Sigma-70_RNA_pol_init_factors"/>
</dbReference>
<dbReference type="InterPro" id="IPR028630">
    <property type="entry name" value="Sigma70_RpoD"/>
</dbReference>
<dbReference type="InterPro" id="IPR036388">
    <property type="entry name" value="WH-like_DNA-bd_sf"/>
</dbReference>
<dbReference type="NCBIfam" id="NF006666">
    <property type="entry name" value="PRK09210.1"/>
    <property type="match status" value="1"/>
</dbReference>
<dbReference type="NCBIfam" id="TIGR02393">
    <property type="entry name" value="RpoD_Cterm"/>
    <property type="match status" value="1"/>
</dbReference>
<dbReference type="NCBIfam" id="TIGR02937">
    <property type="entry name" value="sigma70-ECF"/>
    <property type="match status" value="1"/>
</dbReference>
<dbReference type="PANTHER" id="PTHR30603">
    <property type="entry name" value="RNA POLYMERASE SIGMA FACTOR RPO"/>
    <property type="match status" value="1"/>
</dbReference>
<dbReference type="PANTHER" id="PTHR30603:SF60">
    <property type="entry name" value="RNA POLYMERASE SIGMA FACTOR RPOD"/>
    <property type="match status" value="1"/>
</dbReference>
<dbReference type="Pfam" id="PF03979">
    <property type="entry name" value="Sigma70_r1_1"/>
    <property type="match status" value="1"/>
</dbReference>
<dbReference type="Pfam" id="PF00140">
    <property type="entry name" value="Sigma70_r1_2"/>
    <property type="match status" value="1"/>
</dbReference>
<dbReference type="Pfam" id="PF04542">
    <property type="entry name" value="Sigma70_r2"/>
    <property type="match status" value="1"/>
</dbReference>
<dbReference type="Pfam" id="PF04539">
    <property type="entry name" value="Sigma70_r3"/>
    <property type="match status" value="1"/>
</dbReference>
<dbReference type="Pfam" id="PF04545">
    <property type="entry name" value="Sigma70_r4"/>
    <property type="match status" value="1"/>
</dbReference>
<dbReference type="PRINTS" id="PR00046">
    <property type="entry name" value="SIGMA70FCT"/>
</dbReference>
<dbReference type="SUPFAM" id="SSF88946">
    <property type="entry name" value="Sigma2 domain of RNA polymerase sigma factors"/>
    <property type="match status" value="1"/>
</dbReference>
<dbReference type="SUPFAM" id="SSF88659">
    <property type="entry name" value="Sigma3 and sigma4 domains of RNA polymerase sigma factors"/>
    <property type="match status" value="2"/>
</dbReference>
<dbReference type="PROSITE" id="PS00715">
    <property type="entry name" value="SIGMA70_1"/>
    <property type="match status" value="1"/>
</dbReference>
<dbReference type="PROSITE" id="PS00716">
    <property type="entry name" value="SIGMA70_2"/>
    <property type="match status" value="1"/>
</dbReference>
<keyword id="KW-0963">Cytoplasm</keyword>
<keyword id="KW-0238">DNA-binding</keyword>
<keyword id="KW-1185">Reference proteome</keyword>
<keyword id="KW-0731">Sigma factor</keyword>
<keyword id="KW-0804">Transcription</keyword>
<keyword id="KW-0805">Transcription regulation</keyword>
<sequence>MEKETSKKYEAAVAAFIKENKPKGTVVYDDLANQLATPYTLDAEAMEKLIQKVEDAGISVVDENGDPSEHSLKKDEKEAEKAQAEDLSAPTGVKINDPVRMYLKEIGRVQLLTAAEEVELALKIEEGDQEAKQRLAEANLRLVVSIAKRYVGRGMQFLDLIQEGNMGLMKAVEKFDYRKGFKFSTYATWWIRQAITRAIADQARTIRIPVHMVETINKLIRIQRQLLQDLGREPTPEEIGAEMDLPTEKVREILKIAQEPVSLETPIGEEDDSHLGDFIEDQDATSPAEHAAYELLKEQLEDVLDTLTDREENVLRLRFGLDDGRTRTLEEVGKVFGVTRERIRQIEAKALRKLRHPSRSKQLKDFLE</sequence>
<comment type="function">
    <text evidence="1">Sigma factors are initiation factors that promote the attachment of RNA polymerase to specific initiation sites and are then released. This sigma factor is the primary sigma factor during exponential growth.</text>
</comment>
<comment type="subunit">
    <text evidence="1">Interacts transiently with the RNA polymerase catalytic core.</text>
</comment>
<comment type="subcellular location">
    <subcellularLocation>
        <location evidence="1">Cytoplasm</location>
    </subcellularLocation>
</comment>
<comment type="similarity">
    <text evidence="1">Belongs to the sigma-70 factor family. RpoD/SigA subfamily.</text>
</comment>
<proteinExistence type="inferred from homology"/>
<reference key="1">
    <citation type="journal article" date="1996" name="J. Basic Microbiol.">
        <title>Molecular analysis of the rpoD gene of Enterococcus faecalis.</title>
        <authorList>
            <person name="Frere J."/>
            <person name="Gansel X."/>
            <person name="Benachour A."/>
            <person name="Auffray Y."/>
        </authorList>
    </citation>
    <scope>NUCLEOTIDE SEQUENCE [GENOMIC DNA]</scope>
    <source>
        <strain>ATCC 19433 / DSM 20478 / JCM 8726 / NBRC 100481 / NCIMB 775</strain>
    </source>
</reference>
<reference key="2">
    <citation type="journal article" date="2003" name="Science">
        <title>Role of mobile DNA in the evolution of vancomycin-resistant Enterococcus faecalis.</title>
        <authorList>
            <person name="Paulsen I.T."/>
            <person name="Banerjei L."/>
            <person name="Myers G.S.A."/>
            <person name="Nelson K.E."/>
            <person name="Seshadri R."/>
            <person name="Read T.D."/>
            <person name="Fouts D.E."/>
            <person name="Eisen J.A."/>
            <person name="Gill S.R."/>
            <person name="Heidelberg J.F."/>
            <person name="Tettelin H."/>
            <person name="Dodson R.J."/>
            <person name="Umayam L.A."/>
            <person name="Brinkac L.M."/>
            <person name="Beanan M.J."/>
            <person name="Daugherty S.C."/>
            <person name="DeBoy R.T."/>
            <person name="Durkin S.A."/>
            <person name="Kolonay J.F."/>
            <person name="Madupu R."/>
            <person name="Nelson W.C."/>
            <person name="Vamathevan J.J."/>
            <person name="Tran B."/>
            <person name="Upton J."/>
            <person name="Hansen T."/>
            <person name="Shetty J."/>
            <person name="Khouri H.M."/>
            <person name="Utterback T.R."/>
            <person name="Radune D."/>
            <person name="Ketchum K.A."/>
            <person name="Dougherty B.A."/>
            <person name="Fraser C.M."/>
        </authorList>
    </citation>
    <scope>NUCLEOTIDE SEQUENCE [LARGE SCALE GENOMIC DNA]</scope>
    <source>
        <strain>ATCC 700802 / V583</strain>
    </source>
</reference>
<feature type="chain" id="PRO_0000093888" description="RNA polymerase sigma factor SigA">
    <location>
        <begin position="1"/>
        <end position="368"/>
    </location>
</feature>
<feature type="DNA-binding region" description="H-T-H motif" evidence="1">
    <location>
        <begin position="329"/>
        <end position="348"/>
    </location>
</feature>
<feature type="region of interest" description="Disordered" evidence="2">
    <location>
        <begin position="60"/>
        <end position="86"/>
    </location>
</feature>
<feature type="region of interest" description="Sigma-70 factor domain-2" evidence="1">
    <location>
        <begin position="135"/>
        <end position="205"/>
    </location>
</feature>
<feature type="region of interest" description="Sigma-70 factor domain-3" evidence="1">
    <location>
        <begin position="214"/>
        <end position="290"/>
    </location>
</feature>
<feature type="region of interest" description="Sigma-70 factor domain-4" evidence="1">
    <location>
        <begin position="303"/>
        <end position="356"/>
    </location>
</feature>
<feature type="short sequence motif" description="Interaction with polymerase core subunit RpoC">
    <location>
        <begin position="159"/>
        <end position="162"/>
    </location>
</feature>
<feature type="compositionally biased region" description="Basic and acidic residues" evidence="2">
    <location>
        <begin position="67"/>
        <end position="84"/>
    </location>
</feature>
<feature type="sequence conflict" description="In Ref. 1; CAA60113." evidence="3" ref="1">
    <original>AA</original>
    <variation>GT</variation>
    <location>
        <begin position="14"/>
        <end position="15"/>
    </location>
</feature>
<feature type="sequence conflict" description="In Ref. 1; CAA60113." evidence="3" ref="1">
    <original>I</original>
    <variation>M</variation>
    <location>
        <position position="222"/>
    </location>
</feature>
<feature type="sequence conflict" description="In Ref. 1; CAA60113." evidence="3" ref="1">
    <original>Q</original>
    <variation>N</variation>
    <location>
        <position position="225"/>
    </location>
</feature>
<gene>
    <name evidence="1" type="primary">sigA</name>
    <name type="synonym">rpoD</name>
    <name type="ordered locus">EF_1522</name>
</gene>